<comment type="function">
    <text evidence="1">Catalyzes the adenylation of flavin mononucleotide (FMN) to form flavin adenine dinucleotide (FAD) coenzyme (PubMed:27672192). Can also catalyze, with lower efficiency, the adenylation of the toxic riboflavin analogs 8-demethyl-8-aminoriboflavin mononucleotide (AFMN) and roseoflavin mononucleotide (RoFMN) to 8-demethyl-8-aminoriboflavin adenine dinucleotide (AFAD) and roseoflavin adenine dinucleotide (RoFAD), respectively (PubMed:27672192).</text>
</comment>
<comment type="catalytic activity">
    <reaction evidence="1">
        <text>FMN + ATP + H(+) = FAD + diphosphate</text>
        <dbReference type="Rhea" id="RHEA:17237"/>
        <dbReference type="ChEBI" id="CHEBI:15378"/>
        <dbReference type="ChEBI" id="CHEBI:30616"/>
        <dbReference type="ChEBI" id="CHEBI:33019"/>
        <dbReference type="ChEBI" id="CHEBI:57692"/>
        <dbReference type="ChEBI" id="CHEBI:58210"/>
        <dbReference type="EC" id="2.7.7.2"/>
    </reaction>
</comment>
<comment type="biophysicochemical properties">
    <kinetics>
        <KM evidence="1">12.9 uM for FMN</KM>
        <Vmax evidence="1">1093.0 nmol/min/mg enzyme</Vmax>
        <text evidence="1">kcat is 0.51 sec(-1).</text>
    </kinetics>
</comment>
<comment type="pathway">
    <text evidence="1">Cofactor biosynthesis; FAD biosynthesis; FAD from FMN: step 1/1.</text>
</comment>
<comment type="similarity">
    <text evidence="3">Belongs to the RibF family.</text>
</comment>
<sequence>MEVSHVTLAPNKDSRAAVLTIGKFDGVHIGHQTILNTALSIKKENEILTAISFSPHPLWALKQIEIYREMLTPRMEKERWLAYYGVNHLIETEFTSRYAETTPEEFVTDHLTNLNLSHIVVGSEFNFGKGRDSDVDLLRDLCKPYDIGVTSVPVIETNQTKISSTNIRAFIRRGHFQEAEELLGHPWYITGIVENGEMTGLDDYVLPATGTYQTDSGIVNVTNNRTIEVGLSDGLQQLHMKNELSE</sequence>
<proteinExistence type="evidence at protein level"/>
<evidence type="ECO:0000269" key="1">
    <source>
    </source>
</evidence>
<evidence type="ECO:0000303" key="2">
    <source>
    </source>
</evidence>
<evidence type="ECO:0000305" key="3"/>
<evidence type="ECO:0000312" key="4">
    <source>
        <dbReference type="EMBL" id="CAC98806.1"/>
    </source>
</evidence>
<keyword id="KW-0067">ATP-binding</keyword>
<keyword id="KW-0274">FAD</keyword>
<keyword id="KW-0285">Flavoprotein</keyword>
<keyword id="KW-0288">FMN</keyword>
<keyword id="KW-0547">Nucleotide-binding</keyword>
<keyword id="KW-0548">Nucleotidyltransferase</keyword>
<keyword id="KW-1185">Reference proteome</keyword>
<keyword id="KW-0808">Transferase</keyword>
<dbReference type="EC" id="2.7.7.2" evidence="1"/>
<dbReference type="EMBL" id="AL591976">
    <property type="protein sequence ID" value="CAC98806.1"/>
    <property type="molecule type" value="Genomic_DNA"/>
</dbReference>
<dbReference type="PIR" id="AH1165">
    <property type="entry name" value="AH1165"/>
</dbReference>
<dbReference type="RefSeq" id="NP_464255.1">
    <property type="nucleotide sequence ID" value="NC_003210.1"/>
</dbReference>
<dbReference type="RefSeq" id="WP_003721848.1">
    <property type="nucleotide sequence ID" value="NZ_CP149495.1"/>
</dbReference>
<dbReference type="SMR" id="Q8Y914"/>
<dbReference type="STRING" id="169963.gene:17593379"/>
<dbReference type="PaxDb" id="169963-lmo0728"/>
<dbReference type="EnsemblBacteria" id="CAC98806">
    <property type="protein sequence ID" value="CAC98806"/>
    <property type="gene ID" value="CAC98806"/>
</dbReference>
<dbReference type="GeneID" id="986299"/>
<dbReference type="KEGG" id="lmo:lmo0728"/>
<dbReference type="PATRIC" id="fig|169963.11.peg.750"/>
<dbReference type="eggNOG" id="COG0196">
    <property type="taxonomic scope" value="Bacteria"/>
</dbReference>
<dbReference type="HOGENOM" id="CLU_048437_0_2_9"/>
<dbReference type="OrthoDB" id="9803667at2"/>
<dbReference type="PhylomeDB" id="Q8Y914"/>
<dbReference type="BioCyc" id="LMON169963:LMO0728-MONOMER"/>
<dbReference type="UniPathway" id="UPA00277">
    <property type="reaction ID" value="UER00407"/>
</dbReference>
<dbReference type="PHI-base" id="PHI:123028"/>
<dbReference type="Proteomes" id="UP000000817">
    <property type="component" value="Chromosome"/>
</dbReference>
<dbReference type="GO" id="GO:0005524">
    <property type="term" value="F:ATP binding"/>
    <property type="evidence" value="ECO:0007669"/>
    <property type="project" value="UniProtKB-KW"/>
</dbReference>
<dbReference type="GO" id="GO:0003919">
    <property type="term" value="F:FMN adenylyltransferase activity"/>
    <property type="evidence" value="ECO:0007669"/>
    <property type="project" value="UniProtKB-EC"/>
</dbReference>
<dbReference type="GO" id="GO:0008531">
    <property type="term" value="F:riboflavin kinase activity"/>
    <property type="evidence" value="ECO:0000318"/>
    <property type="project" value="GO_Central"/>
</dbReference>
<dbReference type="GO" id="GO:0006747">
    <property type="term" value="P:FAD biosynthetic process"/>
    <property type="evidence" value="ECO:0007669"/>
    <property type="project" value="UniProtKB-UniPathway"/>
</dbReference>
<dbReference type="GO" id="GO:0009398">
    <property type="term" value="P:FMN biosynthetic process"/>
    <property type="evidence" value="ECO:0000318"/>
    <property type="project" value="GO_Central"/>
</dbReference>
<dbReference type="GO" id="GO:0009231">
    <property type="term" value="P:riboflavin biosynthetic process"/>
    <property type="evidence" value="ECO:0007669"/>
    <property type="project" value="InterPro"/>
</dbReference>
<dbReference type="GO" id="GO:0006771">
    <property type="term" value="P:riboflavin metabolic process"/>
    <property type="evidence" value="ECO:0000318"/>
    <property type="project" value="GO_Central"/>
</dbReference>
<dbReference type="CDD" id="cd02064">
    <property type="entry name" value="FAD_synthetase_N"/>
    <property type="match status" value="1"/>
</dbReference>
<dbReference type="FunFam" id="3.40.50.620:FF:000021">
    <property type="entry name" value="Riboflavin biosynthesis protein"/>
    <property type="match status" value="1"/>
</dbReference>
<dbReference type="Gene3D" id="3.40.50.620">
    <property type="entry name" value="HUPs"/>
    <property type="match status" value="1"/>
</dbReference>
<dbReference type="InterPro" id="IPR015864">
    <property type="entry name" value="FAD_synthase"/>
</dbReference>
<dbReference type="InterPro" id="IPR023468">
    <property type="entry name" value="Riboflavin_kinase"/>
</dbReference>
<dbReference type="InterPro" id="IPR014729">
    <property type="entry name" value="Rossmann-like_a/b/a_fold"/>
</dbReference>
<dbReference type="PANTHER" id="PTHR22749:SF6">
    <property type="entry name" value="RIBOFLAVIN KINASE"/>
    <property type="match status" value="1"/>
</dbReference>
<dbReference type="PANTHER" id="PTHR22749">
    <property type="entry name" value="RIBOFLAVIN KINASE/FMN ADENYLYLTRANSFERASE"/>
    <property type="match status" value="1"/>
</dbReference>
<dbReference type="Pfam" id="PF06574">
    <property type="entry name" value="FAD_syn"/>
    <property type="match status" value="1"/>
</dbReference>
<dbReference type="SUPFAM" id="SSF52374">
    <property type="entry name" value="Nucleotidylyl transferase"/>
    <property type="match status" value="1"/>
</dbReference>
<reference key="1">
    <citation type="journal article" date="2001" name="Science">
        <title>Comparative genomics of Listeria species.</title>
        <authorList>
            <person name="Glaser P."/>
            <person name="Frangeul L."/>
            <person name="Buchrieser C."/>
            <person name="Rusniok C."/>
            <person name="Amend A."/>
            <person name="Baquero F."/>
            <person name="Berche P."/>
            <person name="Bloecker H."/>
            <person name="Brandt P."/>
            <person name="Chakraborty T."/>
            <person name="Charbit A."/>
            <person name="Chetouani F."/>
            <person name="Couve E."/>
            <person name="de Daruvar A."/>
            <person name="Dehoux P."/>
            <person name="Domann E."/>
            <person name="Dominguez-Bernal G."/>
            <person name="Duchaud E."/>
            <person name="Durant L."/>
            <person name="Dussurget O."/>
            <person name="Entian K.-D."/>
            <person name="Fsihi H."/>
            <person name="Garcia-del Portillo F."/>
            <person name="Garrido P."/>
            <person name="Gautier L."/>
            <person name="Goebel W."/>
            <person name="Gomez-Lopez N."/>
            <person name="Hain T."/>
            <person name="Hauf J."/>
            <person name="Jackson D."/>
            <person name="Jones L.-M."/>
            <person name="Kaerst U."/>
            <person name="Kreft J."/>
            <person name="Kuhn M."/>
            <person name="Kunst F."/>
            <person name="Kurapkat G."/>
            <person name="Madueno E."/>
            <person name="Maitournam A."/>
            <person name="Mata Vicente J."/>
            <person name="Ng E."/>
            <person name="Nedjari H."/>
            <person name="Nordsiek G."/>
            <person name="Novella S."/>
            <person name="de Pablos B."/>
            <person name="Perez-Diaz J.-C."/>
            <person name="Purcell R."/>
            <person name="Remmel B."/>
            <person name="Rose M."/>
            <person name="Schlueter T."/>
            <person name="Simoes N."/>
            <person name="Tierrez A."/>
            <person name="Vazquez-Boland J.-A."/>
            <person name="Voss H."/>
            <person name="Wehland J."/>
            <person name="Cossart P."/>
        </authorList>
    </citation>
    <scope>NUCLEOTIDE SEQUENCE [LARGE SCALE GENOMIC DNA]</scope>
    <source>
        <strain>ATCC BAA-679 / EGD-e</strain>
    </source>
</reference>
<reference key="2">
    <citation type="journal article" date="2016" name="J. Bacteriol.">
        <title>Uptake and metabolism of antibiotics roseoflavin and 8-demethyl-8-aminoriboflavin in riboflavin-auxotrophic Listeria monocytogenes.</title>
        <authorList>
            <person name="Matern A."/>
            <person name="Pedrolli D."/>
            <person name="Grosshennig S."/>
            <person name="Johansson J."/>
            <person name="Mack M."/>
        </authorList>
    </citation>
    <scope>FUNCTION</scope>
    <scope>CATALYTIC ACTIVITY</scope>
    <scope>BIOPHYSICOCHEMICAL PROPERTIES</scope>
    <scope>PATHWAY</scope>
</reference>
<protein>
    <recommendedName>
        <fullName evidence="2">FAD synthetase</fullName>
        <ecNumber evidence="1">2.7.7.2</ecNumber>
    </recommendedName>
    <alternativeName>
        <fullName evidence="3">FMN adenylyltransferase</fullName>
    </alternativeName>
    <alternativeName>
        <fullName evidence="3">Flavin adenine dinucleotide synthase</fullName>
    </alternativeName>
</protein>
<feature type="chain" id="PRO_0000448896" description="FAD synthetase">
    <location>
        <begin position="1"/>
        <end position="246"/>
    </location>
</feature>
<name>RIBC_LISMO</name>
<accession>Q8Y914</accession>
<gene>
    <name evidence="2" type="primary">ribC</name>
    <name evidence="4" type="ordered locus">lmo0728</name>
</gene>
<organism>
    <name type="scientific">Listeria monocytogenes serovar 1/2a (strain ATCC BAA-679 / EGD-e)</name>
    <dbReference type="NCBI Taxonomy" id="169963"/>
    <lineage>
        <taxon>Bacteria</taxon>
        <taxon>Bacillati</taxon>
        <taxon>Bacillota</taxon>
        <taxon>Bacilli</taxon>
        <taxon>Bacillales</taxon>
        <taxon>Listeriaceae</taxon>
        <taxon>Listeria</taxon>
    </lineage>
</organism>